<keyword id="KW-0002">3D-structure</keyword>
<keyword id="KW-0963">Cytoplasm</keyword>
<keyword id="KW-0344">Guanine-nucleotide releasing factor</keyword>
<keyword id="KW-0539">Nucleus</keyword>
<keyword id="KW-0597">Phosphoprotein</keyword>
<keyword id="KW-1185">Reference proteome</keyword>
<feature type="chain" id="PRO_0000068879" description="Ral guanine nucleotide dissociation stimulator">
    <location>
        <begin position="1"/>
        <end position="895"/>
    </location>
</feature>
<feature type="domain" description="N-terminal Ras-GEF" evidence="3">
    <location>
        <begin position="112"/>
        <end position="237"/>
    </location>
</feature>
<feature type="domain" description="Ras-GEF" evidence="5">
    <location>
        <begin position="367"/>
        <end position="629"/>
    </location>
</feature>
<feature type="domain" description="Ras-associating" evidence="4">
    <location>
        <begin position="779"/>
        <end position="866"/>
    </location>
</feature>
<feature type="region of interest" description="Disordered" evidence="6">
    <location>
        <begin position="301"/>
        <end position="324"/>
    </location>
</feature>
<feature type="region of interest" description="Disordered" evidence="6">
    <location>
        <begin position="650"/>
        <end position="669"/>
    </location>
</feature>
<feature type="region of interest" description="Disordered" evidence="6">
    <location>
        <begin position="708"/>
        <end position="754"/>
    </location>
</feature>
<feature type="compositionally biased region" description="Pro residues" evidence="6">
    <location>
        <begin position="307"/>
        <end position="318"/>
    </location>
</feature>
<feature type="compositionally biased region" description="Low complexity" evidence="6">
    <location>
        <begin position="656"/>
        <end position="667"/>
    </location>
</feature>
<feature type="compositionally biased region" description="Low complexity" evidence="6">
    <location>
        <begin position="726"/>
        <end position="753"/>
    </location>
</feature>
<feature type="modified residue" description="Phosphotyrosine" evidence="2">
    <location>
        <position position="795"/>
    </location>
</feature>
<feature type="strand" evidence="7">
    <location>
        <begin position="779"/>
        <end position="789"/>
    </location>
</feature>
<feature type="strand" evidence="7">
    <location>
        <begin position="791"/>
        <end position="801"/>
    </location>
</feature>
<feature type="helix" evidence="7">
    <location>
        <begin position="806"/>
        <end position="816"/>
    </location>
</feature>
<feature type="helix" evidence="7">
    <location>
        <begin position="824"/>
        <end position="826"/>
    </location>
</feature>
<feature type="strand" evidence="7">
    <location>
        <begin position="827"/>
        <end position="836"/>
    </location>
</feature>
<feature type="strand" evidence="7">
    <location>
        <begin position="838"/>
        <end position="840"/>
    </location>
</feature>
<feature type="helix" evidence="7">
    <location>
        <begin position="847"/>
        <end position="850"/>
    </location>
</feature>
<feature type="strand" evidence="7">
    <location>
        <begin position="858"/>
        <end position="863"/>
    </location>
</feature>
<comment type="function">
    <text evidence="1 2">Functions as a guanine nucleotide exchange factor (GEF) activating either RalA or RalB GTPases and plays an important role in intracellular transport. Interacts and acts as an effector molecule for R-Ras, H-Ras, K-Ras, and Rap. During bacterial clearance, recognizes 'Lys-33'-linked polyubiquitinated TRAF3 and subsequently mediates assembly of the exocyst complex.</text>
</comment>
<comment type="subunit">
    <text evidence="1 2">Interacts with RIT1 and RIT2 (By similarity). Interacts with TRAF3. Interacts with HRAS (By similarity).</text>
</comment>
<comment type="subcellular location">
    <subcellularLocation>
        <location evidence="1">Cytoplasm</location>
    </subcellularLocation>
    <subcellularLocation>
        <location evidence="1">Nucleus</location>
    </subcellularLocation>
    <text evidence="1">Localizes mainly in the peripheral region of the cytoplasmic membrane in oocytes and in preimplantation embryos until the 8-cell stage. Between the late 1-cell and the early 2-cell stages, nuclear localization becomes stronger. After the 4-cell stage, not detected in the nucleus.</text>
</comment>
<comment type="tissue specificity">
    <text>Expressed in all tissues examined.</text>
</comment>
<comment type="domain">
    <text>The Ras-associating domain interacts with Ras.</text>
</comment>
<comment type="PTM">
    <text evidence="1">Phosphorylation of Tyr-795 by MET blocks HRAS binding.</text>
</comment>
<sequence length="895" mass="98869">MVQRMWAEASGPIGGAEPLFPGSRRSRSVWDAVRLEVGVPDSCPVVLHSFTQLDPDLPRLESSTQEIGEELINGVIYSISLRKVQLYPGATKGQRWLGCENESALNLYETCKVRTVKAGTLEKLVEHLVPAFQGSDLSYVTVFLCTYRAFTTTQQVLDLLFKRYGCILPYSSEDGGPQDQLKNAISSILGTWLDQYSEDFCQPPDFPCLKQLVAYVQLNMPGSDLERRAHLLLAQLEDLEPSEVEPEALSPAPVLSLKPASQLEPAPALLLTPSRAVASTPVREPAPVPVLASSPVVAPASELEPALEPPLDPEPTLAPAPELDPTVSQSLHLEPAPVPAPALEPSWPLPETTENGLCAKPHLLLFPPDLVAEQFTLMDAELFKKVVPYHCLGSIWSQRAKKGKEHLAPTIRATVAQFNNVANCVITTCLGDQSMKASDRARVVEHWIEVARECRVLKNFSSLYAILSALQSNAIHRLKKTWEEVSRGSFRVFQKLSEIFSDENNYSLSRELLIKEGTSKFATLEMNPRRTQRRQKETGVIQGTVPYLGTFLTDLVMLDTAMKDYLYGRLINFEKRRKEFEVIAQIKLLQSACNNYSIVPEEHFGAWFRAMGRLSEAESYNLSCELEPPSESASNTLRSKKSTAIVKRWERRQAPSTELSTSSSAHSKSCDQLRCSPYLSSGDITDALSVHSAGSSTSDVEEINMSFVPESPDGQEKKFWESASQSSPETSGISSASSSTSSSSASTTPVSTTRTHKRSVSGVCSYSSSLPLYNQQVGDCCIIRVSLDVDNGNMYKSILVTSQDKAPTVIRKAMDKHNLDEDEPEDYELLQIISEDHKLKIPENANVFYAMNSAANYDFILKKRAFTKGAKVKHGASSTLPRMKQKGLRIARGIF</sequence>
<organism>
    <name type="scientific">Rattus norvegicus</name>
    <name type="common">Rat</name>
    <dbReference type="NCBI Taxonomy" id="10116"/>
    <lineage>
        <taxon>Eukaryota</taxon>
        <taxon>Metazoa</taxon>
        <taxon>Chordata</taxon>
        <taxon>Craniata</taxon>
        <taxon>Vertebrata</taxon>
        <taxon>Euteleostomi</taxon>
        <taxon>Mammalia</taxon>
        <taxon>Eutheria</taxon>
        <taxon>Euarchontoglires</taxon>
        <taxon>Glires</taxon>
        <taxon>Rodentia</taxon>
        <taxon>Myomorpha</taxon>
        <taxon>Muroidea</taxon>
        <taxon>Muridae</taxon>
        <taxon>Murinae</taxon>
        <taxon>Rattus</taxon>
    </lineage>
</organism>
<gene>
    <name type="primary">Ralgds</name>
</gene>
<name>GNDS_RAT</name>
<dbReference type="EMBL" id="L07925">
    <property type="protein sequence ID" value="AAA41259.1"/>
    <property type="molecule type" value="mRNA"/>
</dbReference>
<dbReference type="RefSeq" id="NP_062123.2">
    <property type="nucleotide sequence ID" value="NM_019250.2"/>
</dbReference>
<dbReference type="PDB" id="1LFD">
    <property type="method" value="X-ray"/>
    <property type="resolution" value="2.10 A"/>
    <property type="chains" value="A/C=778-864"/>
</dbReference>
<dbReference type="PDB" id="1LXD">
    <property type="method" value="X-ray"/>
    <property type="resolution" value="2.40 A"/>
    <property type="chains" value="A/B=767-864"/>
</dbReference>
<dbReference type="PDBsum" id="1LFD"/>
<dbReference type="PDBsum" id="1LXD"/>
<dbReference type="SMR" id="Q03386"/>
<dbReference type="FunCoup" id="Q03386">
    <property type="interactions" value="2111"/>
</dbReference>
<dbReference type="IntAct" id="Q03386">
    <property type="interactions" value="1"/>
</dbReference>
<dbReference type="STRING" id="10116.ENSRNOP00000013809"/>
<dbReference type="iPTMnet" id="Q03386"/>
<dbReference type="PhosphoSitePlus" id="Q03386"/>
<dbReference type="PaxDb" id="10116-ENSRNOP00000013809"/>
<dbReference type="GeneID" id="29622"/>
<dbReference type="KEGG" id="rno:29622"/>
<dbReference type="UCSC" id="RGD:3533">
    <property type="organism name" value="rat"/>
</dbReference>
<dbReference type="AGR" id="RGD:3533"/>
<dbReference type="CTD" id="5900"/>
<dbReference type="RGD" id="3533">
    <property type="gene designation" value="Ralgds"/>
</dbReference>
<dbReference type="eggNOG" id="KOG3629">
    <property type="taxonomic scope" value="Eukaryota"/>
</dbReference>
<dbReference type="InParanoid" id="Q03386"/>
<dbReference type="OrthoDB" id="26687at2759"/>
<dbReference type="PhylomeDB" id="Q03386"/>
<dbReference type="Reactome" id="R-RNO-171007">
    <property type="pathway name" value="p38MAPK events"/>
</dbReference>
<dbReference type="Reactome" id="R-RNO-5673001">
    <property type="pathway name" value="RAF/MAP kinase cascade"/>
</dbReference>
<dbReference type="EvolutionaryTrace" id="Q03386"/>
<dbReference type="PRO" id="PR:Q03386"/>
<dbReference type="Proteomes" id="UP000002494">
    <property type="component" value="Unplaced"/>
</dbReference>
<dbReference type="GO" id="GO:0005903">
    <property type="term" value="C:brush border"/>
    <property type="evidence" value="ECO:0000266"/>
    <property type="project" value="RGD"/>
</dbReference>
<dbReference type="GO" id="GO:0005829">
    <property type="term" value="C:cytosol"/>
    <property type="evidence" value="ECO:0000266"/>
    <property type="project" value="RGD"/>
</dbReference>
<dbReference type="GO" id="GO:0005634">
    <property type="term" value="C:nucleus"/>
    <property type="evidence" value="ECO:0000266"/>
    <property type="project" value="RGD"/>
</dbReference>
<dbReference type="GO" id="GO:0005886">
    <property type="term" value="C:plasma membrane"/>
    <property type="evidence" value="ECO:0000318"/>
    <property type="project" value="GO_Central"/>
</dbReference>
<dbReference type="GO" id="GO:0030695">
    <property type="term" value="F:GTPase regulator activity"/>
    <property type="evidence" value="ECO:0000266"/>
    <property type="project" value="RGD"/>
</dbReference>
<dbReference type="GO" id="GO:0005085">
    <property type="term" value="F:guanyl-nucleotide exchange factor activity"/>
    <property type="evidence" value="ECO:0000318"/>
    <property type="project" value="GO_Central"/>
</dbReference>
<dbReference type="GO" id="GO:0007265">
    <property type="term" value="P:Ras protein signal transduction"/>
    <property type="evidence" value="ECO:0000318"/>
    <property type="project" value="GO_Central"/>
</dbReference>
<dbReference type="GO" id="GO:0007264">
    <property type="term" value="P:small GTPase-mediated signal transduction"/>
    <property type="evidence" value="ECO:0000304"/>
    <property type="project" value="RGD"/>
</dbReference>
<dbReference type="CDD" id="cd17209">
    <property type="entry name" value="RA_RalGDS"/>
    <property type="match status" value="1"/>
</dbReference>
<dbReference type="CDD" id="cd00155">
    <property type="entry name" value="RasGEF"/>
    <property type="match status" value="1"/>
</dbReference>
<dbReference type="CDD" id="cd06224">
    <property type="entry name" value="REM"/>
    <property type="match status" value="1"/>
</dbReference>
<dbReference type="FunFam" id="1.10.840.10:FF:000005">
    <property type="entry name" value="Ral guanine nucleotide dissociation stimulator isoform 1"/>
    <property type="match status" value="1"/>
</dbReference>
<dbReference type="FunFam" id="1.20.870.10:FF:000003">
    <property type="entry name" value="Ral guanine nucleotide dissociation stimulator isoform 1"/>
    <property type="match status" value="1"/>
</dbReference>
<dbReference type="FunFam" id="3.10.20.90:FF:000042">
    <property type="entry name" value="Ral guanine nucleotide dissociation stimulator isoform 1"/>
    <property type="match status" value="1"/>
</dbReference>
<dbReference type="Gene3D" id="3.10.20.90">
    <property type="entry name" value="Phosphatidylinositol 3-kinase Catalytic Subunit, Chain A, domain 1"/>
    <property type="match status" value="1"/>
</dbReference>
<dbReference type="Gene3D" id="1.10.840.10">
    <property type="entry name" value="Ras guanine-nucleotide exchange factors catalytic domain"/>
    <property type="match status" value="1"/>
</dbReference>
<dbReference type="Gene3D" id="1.20.870.10">
    <property type="entry name" value="Son of sevenless (SoS) protein Chain: S domain 1"/>
    <property type="match status" value="1"/>
</dbReference>
<dbReference type="InterPro" id="IPR000159">
    <property type="entry name" value="RA_dom"/>
</dbReference>
<dbReference type="InterPro" id="IPR015758">
    <property type="entry name" value="RalGDS_RA"/>
</dbReference>
<dbReference type="InterPro" id="IPR008937">
    <property type="entry name" value="Ras-like_GEF"/>
</dbReference>
<dbReference type="InterPro" id="IPR000651">
    <property type="entry name" value="Ras-like_Gua-exchang_fac_N"/>
</dbReference>
<dbReference type="InterPro" id="IPR019804">
    <property type="entry name" value="Ras_G-nucl-exch_fac_CS"/>
</dbReference>
<dbReference type="InterPro" id="IPR023578">
    <property type="entry name" value="Ras_GEF_dom_sf"/>
</dbReference>
<dbReference type="InterPro" id="IPR001895">
    <property type="entry name" value="RASGEF_cat_dom"/>
</dbReference>
<dbReference type="InterPro" id="IPR036964">
    <property type="entry name" value="RASGEF_cat_dom_sf"/>
</dbReference>
<dbReference type="InterPro" id="IPR029071">
    <property type="entry name" value="Ubiquitin-like_domsf"/>
</dbReference>
<dbReference type="PANTHER" id="PTHR23113">
    <property type="entry name" value="GUANINE NUCLEOTIDE EXCHANGE FACTOR"/>
    <property type="match status" value="1"/>
</dbReference>
<dbReference type="PANTHER" id="PTHR23113:SF35">
    <property type="entry name" value="RAL GUANINE NUCLEOTIDE DISSOCIATION STIMULATOR"/>
    <property type="match status" value="1"/>
</dbReference>
<dbReference type="Pfam" id="PF00788">
    <property type="entry name" value="RA"/>
    <property type="match status" value="1"/>
</dbReference>
<dbReference type="Pfam" id="PF00617">
    <property type="entry name" value="RasGEF"/>
    <property type="match status" value="1"/>
</dbReference>
<dbReference type="Pfam" id="PF00618">
    <property type="entry name" value="RasGEF_N"/>
    <property type="match status" value="1"/>
</dbReference>
<dbReference type="SMART" id="SM00314">
    <property type="entry name" value="RA"/>
    <property type="match status" value="1"/>
</dbReference>
<dbReference type="SMART" id="SM00147">
    <property type="entry name" value="RasGEF"/>
    <property type="match status" value="1"/>
</dbReference>
<dbReference type="SMART" id="SM00229">
    <property type="entry name" value="RasGEFN"/>
    <property type="match status" value="1"/>
</dbReference>
<dbReference type="SUPFAM" id="SSF48366">
    <property type="entry name" value="Ras GEF"/>
    <property type="match status" value="1"/>
</dbReference>
<dbReference type="SUPFAM" id="SSF54236">
    <property type="entry name" value="Ubiquitin-like"/>
    <property type="match status" value="1"/>
</dbReference>
<dbReference type="PROSITE" id="PS50200">
    <property type="entry name" value="RA"/>
    <property type="match status" value="1"/>
</dbReference>
<dbReference type="PROSITE" id="PS00720">
    <property type="entry name" value="RASGEF"/>
    <property type="match status" value="1"/>
</dbReference>
<dbReference type="PROSITE" id="PS50009">
    <property type="entry name" value="RASGEF_CAT"/>
    <property type="match status" value="1"/>
</dbReference>
<dbReference type="PROSITE" id="PS50212">
    <property type="entry name" value="RASGEF_NTER"/>
    <property type="match status" value="1"/>
</dbReference>
<protein>
    <recommendedName>
        <fullName>Ral guanine nucleotide dissociation stimulator</fullName>
        <shortName>RalGDS</shortName>
    </recommendedName>
    <alternativeName>
        <fullName>Ral guanine nucleotide exchange factor</fullName>
        <shortName>RalGEF</shortName>
    </alternativeName>
</protein>
<reference key="1">
    <citation type="journal article" date="1993" name="EMBO J.">
        <title>Characterization of a guanine nucleotide dissociation stimulator for a ras-related GTPase.</title>
        <authorList>
            <person name="Albright C.F."/>
            <person name="Giddings B.W."/>
            <person name="Liu J."/>
            <person name="Vito M."/>
            <person name="Weinberg R.A."/>
        </authorList>
    </citation>
    <scope>NUCLEOTIDE SEQUENCE [MRNA]</scope>
    <source>
        <tissue>Fibroblast</tissue>
    </source>
</reference>
<reference key="2">
    <citation type="journal article" date="1997" name="Nat. Struct. Biol.">
        <title>Three-dimensional structure of the Ras-interacting domain of RalGDS.</title>
        <authorList>
            <person name="Huang L."/>
            <person name="Weng X."/>
            <person name="Hofer F."/>
            <person name="Martin G.S."/>
            <person name="Kim S.H."/>
        </authorList>
    </citation>
    <scope>X-RAY CRYSTALLOGRAPHY (2.4 ANGSTROMS) OF 778-864</scope>
</reference>
<proteinExistence type="evidence at protein level"/>
<accession>Q03386</accession>
<evidence type="ECO:0000250" key="1">
    <source>
        <dbReference type="UniProtKB" id="Q03385"/>
    </source>
</evidence>
<evidence type="ECO:0000250" key="2">
    <source>
        <dbReference type="UniProtKB" id="Q12967"/>
    </source>
</evidence>
<evidence type="ECO:0000255" key="3">
    <source>
        <dbReference type="PROSITE-ProRule" id="PRU00135"/>
    </source>
</evidence>
<evidence type="ECO:0000255" key="4">
    <source>
        <dbReference type="PROSITE-ProRule" id="PRU00166"/>
    </source>
</evidence>
<evidence type="ECO:0000255" key="5">
    <source>
        <dbReference type="PROSITE-ProRule" id="PRU00168"/>
    </source>
</evidence>
<evidence type="ECO:0000256" key="6">
    <source>
        <dbReference type="SAM" id="MobiDB-lite"/>
    </source>
</evidence>
<evidence type="ECO:0007829" key="7">
    <source>
        <dbReference type="PDB" id="1LFD"/>
    </source>
</evidence>